<dbReference type="EMBL" id="CP001132">
    <property type="protein sequence ID" value="ACH82765.1"/>
    <property type="molecule type" value="Genomic_DNA"/>
</dbReference>
<dbReference type="RefSeq" id="WP_009568793.1">
    <property type="nucleotide sequence ID" value="NC_011206.1"/>
</dbReference>
<dbReference type="SMR" id="B5ELZ3"/>
<dbReference type="GeneID" id="65279719"/>
<dbReference type="KEGG" id="afe:Lferr_0511"/>
<dbReference type="eggNOG" id="COG0096">
    <property type="taxonomic scope" value="Bacteria"/>
</dbReference>
<dbReference type="HOGENOM" id="CLU_098428_0_0_6"/>
<dbReference type="GO" id="GO:1990904">
    <property type="term" value="C:ribonucleoprotein complex"/>
    <property type="evidence" value="ECO:0007669"/>
    <property type="project" value="UniProtKB-KW"/>
</dbReference>
<dbReference type="GO" id="GO:0005840">
    <property type="term" value="C:ribosome"/>
    <property type="evidence" value="ECO:0007669"/>
    <property type="project" value="UniProtKB-KW"/>
</dbReference>
<dbReference type="GO" id="GO:0019843">
    <property type="term" value="F:rRNA binding"/>
    <property type="evidence" value="ECO:0007669"/>
    <property type="project" value="UniProtKB-UniRule"/>
</dbReference>
<dbReference type="GO" id="GO:0003735">
    <property type="term" value="F:structural constituent of ribosome"/>
    <property type="evidence" value="ECO:0007669"/>
    <property type="project" value="InterPro"/>
</dbReference>
<dbReference type="GO" id="GO:0006412">
    <property type="term" value="P:translation"/>
    <property type="evidence" value="ECO:0007669"/>
    <property type="project" value="UniProtKB-UniRule"/>
</dbReference>
<dbReference type="FunFam" id="3.30.1370.30:FF:000002">
    <property type="entry name" value="30S ribosomal protein S8"/>
    <property type="match status" value="1"/>
</dbReference>
<dbReference type="FunFam" id="3.30.1490.10:FF:000001">
    <property type="entry name" value="30S ribosomal protein S8"/>
    <property type="match status" value="1"/>
</dbReference>
<dbReference type="Gene3D" id="3.30.1370.30">
    <property type="match status" value="1"/>
</dbReference>
<dbReference type="Gene3D" id="3.30.1490.10">
    <property type="match status" value="1"/>
</dbReference>
<dbReference type="HAMAP" id="MF_01302_B">
    <property type="entry name" value="Ribosomal_uS8_B"/>
    <property type="match status" value="1"/>
</dbReference>
<dbReference type="InterPro" id="IPR000630">
    <property type="entry name" value="Ribosomal_uS8"/>
</dbReference>
<dbReference type="InterPro" id="IPR047863">
    <property type="entry name" value="Ribosomal_uS8_CS"/>
</dbReference>
<dbReference type="InterPro" id="IPR035987">
    <property type="entry name" value="Ribosomal_uS8_sf"/>
</dbReference>
<dbReference type="NCBIfam" id="NF001109">
    <property type="entry name" value="PRK00136.1"/>
    <property type="match status" value="1"/>
</dbReference>
<dbReference type="PANTHER" id="PTHR11758">
    <property type="entry name" value="40S RIBOSOMAL PROTEIN S15A"/>
    <property type="match status" value="1"/>
</dbReference>
<dbReference type="Pfam" id="PF00410">
    <property type="entry name" value="Ribosomal_S8"/>
    <property type="match status" value="1"/>
</dbReference>
<dbReference type="SUPFAM" id="SSF56047">
    <property type="entry name" value="Ribosomal protein S8"/>
    <property type="match status" value="1"/>
</dbReference>
<dbReference type="PROSITE" id="PS00053">
    <property type="entry name" value="RIBOSOMAL_S8"/>
    <property type="match status" value="1"/>
</dbReference>
<keyword id="KW-0687">Ribonucleoprotein</keyword>
<keyword id="KW-0689">Ribosomal protein</keyword>
<keyword id="KW-0694">RNA-binding</keyword>
<keyword id="KW-0699">rRNA-binding</keyword>
<sequence>MSVTDPIADMLTRIRNAQQVNKAKVRMPASKLKRAIARVLVEEGYIQEVKEDVANGHPVLDLTLKYYAGAGVIAEIRRVSRPGVRVYRGAEDLPRVRDGFGIAIISTSQGIMTDRAARSAGIGGEVLCVVS</sequence>
<organism>
    <name type="scientific">Acidithiobacillus ferrooxidans (strain ATCC 53993 / BNL-5-31)</name>
    <name type="common">Leptospirillum ferrooxidans (ATCC 53993)</name>
    <dbReference type="NCBI Taxonomy" id="380394"/>
    <lineage>
        <taxon>Bacteria</taxon>
        <taxon>Pseudomonadati</taxon>
        <taxon>Pseudomonadota</taxon>
        <taxon>Acidithiobacillia</taxon>
        <taxon>Acidithiobacillales</taxon>
        <taxon>Acidithiobacillaceae</taxon>
        <taxon>Acidithiobacillus</taxon>
    </lineage>
</organism>
<proteinExistence type="inferred from homology"/>
<gene>
    <name evidence="1" type="primary">rpsH</name>
    <name type="ordered locus">Lferr_0511</name>
</gene>
<protein>
    <recommendedName>
        <fullName evidence="1">Small ribosomal subunit protein uS8</fullName>
    </recommendedName>
    <alternativeName>
        <fullName evidence="2">30S ribosomal protein S8</fullName>
    </alternativeName>
</protein>
<evidence type="ECO:0000255" key="1">
    <source>
        <dbReference type="HAMAP-Rule" id="MF_01302"/>
    </source>
</evidence>
<evidence type="ECO:0000305" key="2"/>
<name>RS8_ACIF5</name>
<reference key="1">
    <citation type="submission" date="2008-08" db="EMBL/GenBank/DDBJ databases">
        <title>Complete sequence of Acidithiobacillus ferrooxidans ATCC 53993.</title>
        <authorList>
            <person name="Lucas S."/>
            <person name="Copeland A."/>
            <person name="Lapidus A."/>
            <person name="Glavina del Rio T."/>
            <person name="Dalin E."/>
            <person name="Tice H."/>
            <person name="Bruce D."/>
            <person name="Goodwin L."/>
            <person name="Pitluck S."/>
            <person name="Sims D."/>
            <person name="Brettin T."/>
            <person name="Detter J.C."/>
            <person name="Han C."/>
            <person name="Kuske C.R."/>
            <person name="Larimer F."/>
            <person name="Land M."/>
            <person name="Hauser L."/>
            <person name="Kyrpides N."/>
            <person name="Lykidis A."/>
            <person name="Borole A.P."/>
        </authorList>
    </citation>
    <scope>NUCLEOTIDE SEQUENCE [LARGE SCALE GENOMIC DNA]</scope>
    <source>
        <strain>ATCC 53993 / BNL-5-31</strain>
    </source>
</reference>
<accession>B5ELZ3</accession>
<comment type="function">
    <text evidence="1">One of the primary rRNA binding proteins, it binds directly to 16S rRNA central domain where it helps coordinate assembly of the platform of the 30S subunit.</text>
</comment>
<comment type="subunit">
    <text evidence="1">Part of the 30S ribosomal subunit. Contacts proteins S5 and S12.</text>
</comment>
<comment type="similarity">
    <text evidence="1">Belongs to the universal ribosomal protein uS8 family.</text>
</comment>
<feature type="chain" id="PRO_1000140500" description="Small ribosomal subunit protein uS8">
    <location>
        <begin position="1"/>
        <end position="131"/>
    </location>
</feature>